<feature type="chain" id="PRO_0000349573" description="tRNA-specific 2-thiouridylase MnmA">
    <location>
        <begin position="1"/>
        <end position="409"/>
    </location>
</feature>
<feature type="region of interest" description="Interaction with tRNA" evidence="1">
    <location>
        <begin position="185"/>
        <end position="187"/>
    </location>
</feature>
<feature type="active site" description="Nucleophile" evidence="1">
    <location>
        <position position="137"/>
    </location>
</feature>
<feature type="active site" description="Cysteine persulfide intermediate" evidence="1">
    <location>
        <position position="235"/>
    </location>
</feature>
<feature type="binding site" evidence="1">
    <location>
        <begin position="43"/>
        <end position="50"/>
    </location>
    <ligand>
        <name>ATP</name>
        <dbReference type="ChEBI" id="CHEBI:30616"/>
    </ligand>
</feature>
<feature type="binding site" evidence="1">
    <location>
        <position position="69"/>
    </location>
    <ligand>
        <name>ATP</name>
        <dbReference type="ChEBI" id="CHEBI:30616"/>
    </ligand>
</feature>
<feature type="binding site" evidence="1">
    <location>
        <position position="161"/>
    </location>
    <ligand>
        <name>ATP</name>
        <dbReference type="ChEBI" id="CHEBI:30616"/>
    </ligand>
</feature>
<feature type="site" description="Interaction with tRNA" evidence="1">
    <location>
        <position position="162"/>
    </location>
</feature>
<feature type="site" description="Interaction with tRNA" evidence="1">
    <location>
        <position position="382"/>
    </location>
</feature>
<feature type="disulfide bond" description="Alternate" evidence="1">
    <location>
        <begin position="137"/>
        <end position="235"/>
    </location>
</feature>
<name>MNMA_CAUSK</name>
<reference key="1">
    <citation type="submission" date="2008-01" db="EMBL/GenBank/DDBJ databases">
        <title>Complete sequence of chromosome of Caulobacter sp. K31.</title>
        <authorList>
            <consortium name="US DOE Joint Genome Institute"/>
            <person name="Copeland A."/>
            <person name="Lucas S."/>
            <person name="Lapidus A."/>
            <person name="Barry K."/>
            <person name="Glavina del Rio T."/>
            <person name="Dalin E."/>
            <person name="Tice H."/>
            <person name="Pitluck S."/>
            <person name="Bruce D."/>
            <person name="Goodwin L."/>
            <person name="Thompson L.S."/>
            <person name="Brettin T."/>
            <person name="Detter J.C."/>
            <person name="Han C."/>
            <person name="Schmutz J."/>
            <person name="Larimer F."/>
            <person name="Land M."/>
            <person name="Hauser L."/>
            <person name="Kyrpides N."/>
            <person name="Kim E."/>
            <person name="Stephens C."/>
            <person name="Richardson P."/>
        </authorList>
    </citation>
    <scope>NUCLEOTIDE SEQUENCE [LARGE SCALE GENOMIC DNA]</scope>
    <source>
        <strain>K31</strain>
    </source>
</reference>
<gene>
    <name evidence="1" type="primary">mnmA</name>
    <name type="ordered locus">Caul_1005</name>
</gene>
<keyword id="KW-0067">ATP-binding</keyword>
<keyword id="KW-0963">Cytoplasm</keyword>
<keyword id="KW-1015">Disulfide bond</keyword>
<keyword id="KW-0547">Nucleotide-binding</keyword>
<keyword id="KW-0694">RNA-binding</keyword>
<keyword id="KW-0808">Transferase</keyword>
<keyword id="KW-0819">tRNA processing</keyword>
<keyword id="KW-0820">tRNA-binding</keyword>
<evidence type="ECO:0000255" key="1">
    <source>
        <dbReference type="HAMAP-Rule" id="MF_00144"/>
    </source>
</evidence>
<sequence>MAAMDADIAPFDTARTDHGLMDRAVEQARAAVGLPVGTRIVAAMSGGVDSTVTAALLAKAGYDVVGVTLQLYDHGAAITKKGACCAGQDILDARMAAERIGIPHYVLDYESRFKEQVIEEFADAYLRGETPIPCVRCNQTVKFRDLLDVARDLGAEAMATGHYVQRSFAAGANRPQLRRAADPAKDQSYFLFATTAEQLDFLRFPLGGMDKPTVRLVAAELGLAIADKPDSQDICFVPEGKYTTVIDRIRPHGALPGDLVHMDGRVLGRHEGVTRYTIGQRRGLNIAVGDPLFVVKIDADKRQVIVGPREALLTQALSLKEGNWLGVEDSLEAAAAAGAPVLARVRSTREPVPGRLTLVPGPNGGEPRLVFDGLEEGVAPGQACVLYDPADPERVLGGGFIVATERAGL</sequence>
<organism>
    <name type="scientific">Caulobacter sp. (strain K31)</name>
    <dbReference type="NCBI Taxonomy" id="366602"/>
    <lineage>
        <taxon>Bacteria</taxon>
        <taxon>Pseudomonadati</taxon>
        <taxon>Pseudomonadota</taxon>
        <taxon>Alphaproteobacteria</taxon>
        <taxon>Caulobacterales</taxon>
        <taxon>Caulobacteraceae</taxon>
        <taxon>Caulobacter</taxon>
    </lineage>
</organism>
<comment type="function">
    <text evidence="1">Catalyzes the 2-thiolation of uridine at the wobble position (U34) of tRNA, leading to the formation of s(2)U34.</text>
</comment>
<comment type="catalytic activity">
    <reaction evidence="1">
        <text>S-sulfanyl-L-cysteinyl-[protein] + uridine(34) in tRNA + AH2 + ATP = 2-thiouridine(34) in tRNA + L-cysteinyl-[protein] + A + AMP + diphosphate + H(+)</text>
        <dbReference type="Rhea" id="RHEA:47032"/>
        <dbReference type="Rhea" id="RHEA-COMP:10131"/>
        <dbReference type="Rhea" id="RHEA-COMP:11726"/>
        <dbReference type="Rhea" id="RHEA-COMP:11727"/>
        <dbReference type="Rhea" id="RHEA-COMP:11728"/>
        <dbReference type="ChEBI" id="CHEBI:13193"/>
        <dbReference type="ChEBI" id="CHEBI:15378"/>
        <dbReference type="ChEBI" id="CHEBI:17499"/>
        <dbReference type="ChEBI" id="CHEBI:29950"/>
        <dbReference type="ChEBI" id="CHEBI:30616"/>
        <dbReference type="ChEBI" id="CHEBI:33019"/>
        <dbReference type="ChEBI" id="CHEBI:61963"/>
        <dbReference type="ChEBI" id="CHEBI:65315"/>
        <dbReference type="ChEBI" id="CHEBI:87170"/>
        <dbReference type="ChEBI" id="CHEBI:456215"/>
        <dbReference type="EC" id="2.8.1.13"/>
    </reaction>
</comment>
<comment type="subcellular location">
    <subcellularLocation>
        <location evidence="1">Cytoplasm</location>
    </subcellularLocation>
</comment>
<comment type="similarity">
    <text evidence="1">Belongs to the MnmA/TRMU family.</text>
</comment>
<accession>B0SWD8</accession>
<protein>
    <recommendedName>
        <fullName evidence="1">tRNA-specific 2-thiouridylase MnmA</fullName>
        <ecNumber evidence="1">2.8.1.13</ecNumber>
    </recommendedName>
</protein>
<proteinExistence type="inferred from homology"/>
<dbReference type="EC" id="2.8.1.13" evidence="1"/>
<dbReference type="EMBL" id="CP000927">
    <property type="protein sequence ID" value="ABZ70135.1"/>
    <property type="molecule type" value="Genomic_DNA"/>
</dbReference>
<dbReference type="SMR" id="B0SWD8"/>
<dbReference type="STRING" id="366602.Caul_1005"/>
<dbReference type="KEGG" id="cak:Caul_1005"/>
<dbReference type="eggNOG" id="COG0482">
    <property type="taxonomic scope" value="Bacteria"/>
</dbReference>
<dbReference type="HOGENOM" id="CLU_035188_0_0_5"/>
<dbReference type="GO" id="GO:0005737">
    <property type="term" value="C:cytoplasm"/>
    <property type="evidence" value="ECO:0007669"/>
    <property type="project" value="UniProtKB-SubCell"/>
</dbReference>
<dbReference type="GO" id="GO:0005524">
    <property type="term" value="F:ATP binding"/>
    <property type="evidence" value="ECO:0007669"/>
    <property type="project" value="UniProtKB-KW"/>
</dbReference>
<dbReference type="GO" id="GO:0000049">
    <property type="term" value="F:tRNA binding"/>
    <property type="evidence" value="ECO:0007669"/>
    <property type="project" value="UniProtKB-KW"/>
</dbReference>
<dbReference type="GO" id="GO:0103016">
    <property type="term" value="F:tRNA-uridine 2-sulfurtransferase activity"/>
    <property type="evidence" value="ECO:0007669"/>
    <property type="project" value="UniProtKB-EC"/>
</dbReference>
<dbReference type="GO" id="GO:0002143">
    <property type="term" value="P:tRNA wobble position uridine thiolation"/>
    <property type="evidence" value="ECO:0007669"/>
    <property type="project" value="TreeGrafter"/>
</dbReference>
<dbReference type="CDD" id="cd01998">
    <property type="entry name" value="MnmA_TRMU-like"/>
    <property type="match status" value="1"/>
</dbReference>
<dbReference type="FunFam" id="2.30.30.280:FF:000001">
    <property type="entry name" value="tRNA-specific 2-thiouridylase MnmA"/>
    <property type="match status" value="1"/>
</dbReference>
<dbReference type="FunFam" id="3.40.50.620:FF:000115">
    <property type="entry name" value="tRNA-specific 2-thiouridylase MnmA"/>
    <property type="match status" value="1"/>
</dbReference>
<dbReference type="Gene3D" id="2.30.30.280">
    <property type="entry name" value="Adenine nucleotide alpha hydrolases-like domains"/>
    <property type="match status" value="1"/>
</dbReference>
<dbReference type="Gene3D" id="3.40.50.620">
    <property type="entry name" value="HUPs"/>
    <property type="match status" value="1"/>
</dbReference>
<dbReference type="Gene3D" id="2.40.30.10">
    <property type="entry name" value="Translation factors"/>
    <property type="match status" value="1"/>
</dbReference>
<dbReference type="HAMAP" id="MF_00144">
    <property type="entry name" value="tRNA_thiouridyl_MnmA"/>
    <property type="match status" value="1"/>
</dbReference>
<dbReference type="InterPro" id="IPR004506">
    <property type="entry name" value="MnmA-like"/>
</dbReference>
<dbReference type="InterPro" id="IPR046885">
    <property type="entry name" value="MnmA-like_C"/>
</dbReference>
<dbReference type="InterPro" id="IPR046884">
    <property type="entry name" value="MnmA-like_central"/>
</dbReference>
<dbReference type="InterPro" id="IPR023382">
    <property type="entry name" value="MnmA-like_central_sf"/>
</dbReference>
<dbReference type="InterPro" id="IPR014729">
    <property type="entry name" value="Rossmann-like_a/b/a_fold"/>
</dbReference>
<dbReference type="NCBIfam" id="NF001138">
    <property type="entry name" value="PRK00143.1"/>
    <property type="match status" value="1"/>
</dbReference>
<dbReference type="NCBIfam" id="TIGR00420">
    <property type="entry name" value="trmU"/>
    <property type="match status" value="1"/>
</dbReference>
<dbReference type="PANTHER" id="PTHR11933:SF5">
    <property type="entry name" value="MITOCHONDRIAL TRNA-SPECIFIC 2-THIOURIDYLASE 1"/>
    <property type="match status" value="1"/>
</dbReference>
<dbReference type="PANTHER" id="PTHR11933">
    <property type="entry name" value="TRNA 5-METHYLAMINOMETHYL-2-THIOURIDYLATE -METHYLTRANSFERASE"/>
    <property type="match status" value="1"/>
</dbReference>
<dbReference type="Pfam" id="PF03054">
    <property type="entry name" value="tRNA_Me_trans"/>
    <property type="match status" value="1"/>
</dbReference>
<dbReference type="Pfam" id="PF20258">
    <property type="entry name" value="tRNA_Me_trans_C"/>
    <property type="match status" value="1"/>
</dbReference>
<dbReference type="Pfam" id="PF20259">
    <property type="entry name" value="tRNA_Me_trans_M"/>
    <property type="match status" value="1"/>
</dbReference>
<dbReference type="SUPFAM" id="SSF52402">
    <property type="entry name" value="Adenine nucleotide alpha hydrolases-like"/>
    <property type="match status" value="1"/>
</dbReference>